<protein>
    <recommendedName>
        <fullName>U1 small nuclear ribonucleoprotein A</fullName>
        <shortName>U1 snRNP protein A</shortName>
    </recommendedName>
</protein>
<name>RU1A_ORYSI</name>
<proteinExistence type="inferred from homology"/>
<evidence type="ECO:0000250" key="1"/>
<evidence type="ECO:0000255" key="2">
    <source>
        <dbReference type="PROSITE-ProRule" id="PRU00176"/>
    </source>
</evidence>
<evidence type="ECO:0000256" key="3">
    <source>
        <dbReference type="SAM" id="MobiDB-lite"/>
    </source>
</evidence>
<evidence type="ECO:0000305" key="4"/>
<sequence>MSGEVAAAVGGGAPEENGAPPNVTIYINNLNEKIKLEELKKSLRAVFSQFGKILDVLAFKTLKHKGQAWVVFEDVASATEALKSMQDFPFHNKPMRIQYAKTKSDIIAKADGTFVPRERRKRNDEKPEKKQKREQHHDVSQVGLGVNAYPGVYGAPPLSQLPFAGAQKVMMPEIIVPNNILFVQNLPHETTPMMLQMLFCQYPGFKEVRMVEAKPGIAFVEYGDEGQATAAMNHLQGFKITKDNQMLISYAKK</sequence>
<organism>
    <name type="scientific">Oryza sativa subsp. indica</name>
    <name type="common">Rice</name>
    <dbReference type="NCBI Taxonomy" id="39946"/>
    <lineage>
        <taxon>Eukaryota</taxon>
        <taxon>Viridiplantae</taxon>
        <taxon>Streptophyta</taxon>
        <taxon>Embryophyta</taxon>
        <taxon>Tracheophyta</taxon>
        <taxon>Spermatophyta</taxon>
        <taxon>Magnoliopsida</taxon>
        <taxon>Liliopsida</taxon>
        <taxon>Poales</taxon>
        <taxon>Poaceae</taxon>
        <taxon>BOP clade</taxon>
        <taxon>Oryzoideae</taxon>
        <taxon>Oryzeae</taxon>
        <taxon>Oryzinae</taxon>
        <taxon>Oryza</taxon>
        <taxon>Oryza sativa</taxon>
    </lineage>
</organism>
<accession>A2Y0J7</accession>
<gene>
    <name type="ORF">OsI_18512</name>
</gene>
<feature type="chain" id="PRO_0000416928" description="U1 small nuclear ribonucleoprotein A">
    <location>
        <begin position="1"/>
        <end position="253"/>
    </location>
</feature>
<feature type="domain" description="RRM 1" evidence="2">
    <location>
        <begin position="23"/>
        <end position="102"/>
    </location>
</feature>
<feature type="domain" description="RRM 2" evidence="2">
    <location>
        <begin position="179"/>
        <end position="253"/>
    </location>
</feature>
<feature type="region of interest" description="Disordered" evidence="3">
    <location>
        <begin position="111"/>
        <end position="140"/>
    </location>
</feature>
<comment type="function">
    <text evidence="1">Involved in nuclear pre-mRNA splicing.</text>
</comment>
<comment type="subunit">
    <text evidence="1">Component of the spliceosome where it is associated with snRNP U1.</text>
</comment>
<comment type="subcellular location">
    <subcellularLocation>
        <location evidence="1">Nucleus</location>
        <location evidence="1">Nucleolus</location>
    </subcellularLocation>
</comment>
<comment type="similarity">
    <text evidence="4">Belongs to the RRM U1 A/B'' family.</text>
</comment>
<keyword id="KW-0507">mRNA processing</keyword>
<keyword id="KW-0508">mRNA splicing</keyword>
<keyword id="KW-0539">Nucleus</keyword>
<keyword id="KW-1185">Reference proteome</keyword>
<keyword id="KW-0677">Repeat</keyword>
<keyword id="KW-0687">Ribonucleoprotein</keyword>
<keyword id="KW-0694">RNA-binding</keyword>
<keyword id="KW-0747">Spliceosome</keyword>
<dbReference type="EMBL" id="CM000130">
    <property type="protein sequence ID" value="EAY96607.1"/>
    <property type="molecule type" value="Genomic_DNA"/>
</dbReference>
<dbReference type="SMR" id="A2Y0J7"/>
<dbReference type="STRING" id="39946.A2Y0J7"/>
<dbReference type="EnsemblPlants" id="BGIOSGA019209-TA">
    <property type="protein sequence ID" value="BGIOSGA019209-PA"/>
    <property type="gene ID" value="BGIOSGA019209"/>
</dbReference>
<dbReference type="Gramene" id="BGIOSGA019209-TA">
    <property type="protein sequence ID" value="BGIOSGA019209-PA"/>
    <property type="gene ID" value="BGIOSGA019209"/>
</dbReference>
<dbReference type="HOGENOM" id="CLU_041869_1_1_1"/>
<dbReference type="OMA" id="LKKGWVM"/>
<dbReference type="Proteomes" id="UP000007015">
    <property type="component" value="Chromosome 5"/>
</dbReference>
<dbReference type="GO" id="GO:0005730">
    <property type="term" value="C:nucleolus"/>
    <property type="evidence" value="ECO:0007669"/>
    <property type="project" value="UniProtKB-SubCell"/>
</dbReference>
<dbReference type="GO" id="GO:0005681">
    <property type="term" value="C:spliceosomal complex"/>
    <property type="evidence" value="ECO:0007669"/>
    <property type="project" value="UniProtKB-KW"/>
</dbReference>
<dbReference type="GO" id="GO:0005685">
    <property type="term" value="C:U1 snRNP"/>
    <property type="evidence" value="ECO:0000250"/>
    <property type="project" value="UniProtKB"/>
</dbReference>
<dbReference type="GO" id="GO:0003723">
    <property type="term" value="F:RNA binding"/>
    <property type="evidence" value="ECO:0007669"/>
    <property type="project" value="UniProtKB-KW"/>
</dbReference>
<dbReference type="GO" id="GO:0006397">
    <property type="term" value="P:mRNA processing"/>
    <property type="evidence" value="ECO:0007669"/>
    <property type="project" value="UniProtKB-KW"/>
</dbReference>
<dbReference type="GO" id="GO:0008380">
    <property type="term" value="P:RNA splicing"/>
    <property type="evidence" value="ECO:0007669"/>
    <property type="project" value="UniProtKB-KW"/>
</dbReference>
<dbReference type="CDD" id="cd12246">
    <property type="entry name" value="RRM1_U1A_like"/>
    <property type="match status" value="1"/>
</dbReference>
<dbReference type="CDD" id="cd12247">
    <property type="entry name" value="RRM2_U1A_like"/>
    <property type="match status" value="1"/>
</dbReference>
<dbReference type="FunFam" id="3.30.70.330:FF:000039">
    <property type="entry name" value="U1 small nuclear ribonucleoprotein A"/>
    <property type="match status" value="1"/>
</dbReference>
<dbReference type="FunFam" id="3.30.70.330:FF:000029">
    <property type="entry name" value="U2 small nuclear ribonucleoprotein B"/>
    <property type="match status" value="1"/>
</dbReference>
<dbReference type="Gene3D" id="3.30.70.330">
    <property type="match status" value="2"/>
</dbReference>
<dbReference type="InterPro" id="IPR012677">
    <property type="entry name" value="Nucleotide-bd_a/b_plait_sf"/>
</dbReference>
<dbReference type="InterPro" id="IPR035979">
    <property type="entry name" value="RBD_domain_sf"/>
</dbReference>
<dbReference type="InterPro" id="IPR000504">
    <property type="entry name" value="RRM_dom"/>
</dbReference>
<dbReference type="PANTHER" id="PTHR10501">
    <property type="entry name" value="U1 SMALL NUCLEAR RIBONUCLEOPROTEIN A/U2 SMALL NUCLEAR RIBONUCLEOPROTEIN B"/>
    <property type="match status" value="1"/>
</dbReference>
<dbReference type="Pfam" id="PF00076">
    <property type="entry name" value="RRM_1"/>
    <property type="match status" value="2"/>
</dbReference>
<dbReference type="SMART" id="SM00360">
    <property type="entry name" value="RRM"/>
    <property type="match status" value="2"/>
</dbReference>
<dbReference type="SUPFAM" id="SSF54928">
    <property type="entry name" value="RNA-binding domain, RBD"/>
    <property type="match status" value="1"/>
</dbReference>
<dbReference type="PROSITE" id="PS50102">
    <property type="entry name" value="RRM"/>
    <property type="match status" value="2"/>
</dbReference>
<reference key="1">
    <citation type="journal article" date="2005" name="PLoS Biol.">
        <title>The genomes of Oryza sativa: a history of duplications.</title>
        <authorList>
            <person name="Yu J."/>
            <person name="Wang J."/>
            <person name="Lin W."/>
            <person name="Li S."/>
            <person name="Li H."/>
            <person name="Zhou J."/>
            <person name="Ni P."/>
            <person name="Dong W."/>
            <person name="Hu S."/>
            <person name="Zeng C."/>
            <person name="Zhang J."/>
            <person name="Zhang Y."/>
            <person name="Li R."/>
            <person name="Xu Z."/>
            <person name="Li S."/>
            <person name="Li X."/>
            <person name="Zheng H."/>
            <person name="Cong L."/>
            <person name="Lin L."/>
            <person name="Yin J."/>
            <person name="Geng J."/>
            <person name="Li G."/>
            <person name="Shi J."/>
            <person name="Liu J."/>
            <person name="Lv H."/>
            <person name="Li J."/>
            <person name="Wang J."/>
            <person name="Deng Y."/>
            <person name="Ran L."/>
            <person name="Shi X."/>
            <person name="Wang X."/>
            <person name="Wu Q."/>
            <person name="Li C."/>
            <person name="Ren X."/>
            <person name="Wang J."/>
            <person name="Wang X."/>
            <person name="Li D."/>
            <person name="Liu D."/>
            <person name="Zhang X."/>
            <person name="Ji Z."/>
            <person name="Zhao W."/>
            <person name="Sun Y."/>
            <person name="Zhang Z."/>
            <person name="Bao J."/>
            <person name="Han Y."/>
            <person name="Dong L."/>
            <person name="Ji J."/>
            <person name="Chen P."/>
            <person name="Wu S."/>
            <person name="Liu J."/>
            <person name="Xiao Y."/>
            <person name="Bu D."/>
            <person name="Tan J."/>
            <person name="Yang L."/>
            <person name="Ye C."/>
            <person name="Zhang J."/>
            <person name="Xu J."/>
            <person name="Zhou Y."/>
            <person name="Yu Y."/>
            <person name="Zhang B."/>
            <person name="Zhuang S."/>
            <person name="Wei H."/>
            <person name="Liu B."/>
            <person name="Lei M."/>
            <person name="Yu H."/>
            <person name="Li Y."/>
            <person name="Xu H."/>
            <person name="Wei S."/>
            <person name="He X."/>
            <person name="Fang L."/>
            <person name="Zhang Z."/>
            <person name="Zhang Y."/>
            <person name="Huang X."/>
            <person name="Su Z."/>
            <person name="Tong W."/>
            <person name="Li J."/>
            <person name="Tong Z."/>
            <person name="Li S."/>
            <person name="Ye J."/>
            <person name="Wang L."/>
            <person name="Fang L."/>
            <person name="Lei T."/>
            <person name="Chen C.-S."/>
            <person name="Chen H.-C."/>
            <person name="Xu Z."/>
            <person name="Li H."/>
            <person name="Huang H."/>
            <person name="Zhang F."/>
            <person name="Xu H."/>
            <person name="Li N."/>
            <person name="Zhao C."/>
            <person name="Li S."/>
            <person name="Dong L."/>
            <person name="Huang Y."/>
            <person name="Li L."/>
            <person name="Xi Y."/>
            <person name="Qi Q."/>
            <person name="Li W."/>
            <person name="Zhang B."/>
            <person name="Hu W."/>
            <person name="Zhang Y."/>
            <person name="Tian X."/>
            <person name="Jiao Y."/>
            <person name="Liang X."/>
            <person name="Jin J."/>
            <person name="Gao L."/>
            <person name="Zheng W."/>
            <person name="Hao B."/>
            <person name="Liu S.-M."/>
            <person name="Wang W."/>
            <person name="Yuan L."/>
            <person name="Cao M."/>
            <person name="McDermott J."/>
            <person name="Samudrala R."/>
            <person name="Wang J."/>
            <person name="Wong G.K.-S."/>
            <person name="Yang H."/>
        </authorList>
    </citation>
    <scope>NUCLEOTIDE SEQUENCE [LARGE SCALE GENOMIC DNA]</scope>
    <source>
        <strain>cv. 93-11</strain>
    </source>
</reference>